<evidence type="ECO:0000255" key="1">
    <source>
        <dbReference type="HAMAP-Rule" id="MF_01395"/>
    </source>
</evidence>
<evidence type="ECO:0000255" key="2">
    <source>
        <dbReference type="PROSITE-ProRule" id="PRU01136"/>
    </source>
</evidence>
<dbReference type="EC" id="2.1.3.15" evidence="1"/>
<dbReference type="EMBL" id="AE009949">
    <property type="protein sequence ID" value="AAL98336.1"/>
    <property type="molecule type" value="Genomic_DNA"/>
</dbReference>
<dbReference type="RefSeq" id="WP_002983347.1">
    <property type="nucleotide sequence ID" value="NC_003485.1"/>
</dbReference>
<dbReference type="SMR" id="Q8NZN5"/>
<dbReference type="KEGG" id="spm:spyM18_1816"/>
<dbReference type="HOGENOM" id="CLU_015486_1_1_9"/>
<dbReference type="UniPathway" id="UPA00655">
    <property type="reaction ID" value="UER00711"/>
</dbReference>
<dbReference type="GO" id="GO:0009317">
    <property type="term" value="C:acetyl-CoA carboxylase complex"/>
    <property type="evidence" value="ECO:0007669"/>
    <property type="project" value="InterPro"/>
</dbReference>
<dbReference type="GO" id="GO:0003989">
    <property type="term" value="F:acetyl-CoA carboxylase activity"/>
    <property type="evidence" value="ECO:0007669"/>
    <property type="project" value="InterPro"/>
</dbReference>
<dbReference type="GO" id="GO:0005524">
    <property type="term" value="F:ATP binding"/>
    <property type="evidence" value="ECO:0007669"/>
    <property type="project" value="UniProtKB-KW"/>
</dbReference>
<dbReference type="GO" id="GO:0016743">
    <property type="term" value="F:carboxyl- or carbamoyltransferase activity"/>
    <property type="evidence" value="ECO:0007669"/>
    <property type="project" value="UniProtKB-UniRule"/>
</dbReference>
<dbReference type="GO" id="GO:0008270">
    <property type="term" value="F:zinc ion binding"/>
    <property type="evidence" value="ECO:0007669"/>
    <property type="project" value="UniProtKB-UniRule"/>
</dbReference>
<dbReference type="GO" id="GO:0006633">
    <property type="term" value="P:fatty acid biosynthetic process"/>
    <property type="evidence" value="ECO:0007669"/>
    <property type="project" value="UniProtKB-KW"/>
</dbReference>
<dbReference type="GO" id="GO:2001295">
    <property type="term" value="P:malonyl-CoA biosynthetic process"/>
    <property type="evidence" value="ECO:0007669"/>
    <property type="project" value="UniProtKB-UniRule"/>
</dbReference>
<dbReference type="Gene3D" id="3.90.226.10">
    <property type="entry name" value="2-enoyl-CoA Hydratase, Chain A, domain 1"/>
    <property type="match status" value="1"/>
</dbReference>
<dbReference type="HAMAP" id="MF_01395">
    <property type="entry name" value="AcetylCoA_CT_beta"/>
    <property type="match status" value="1"/>
</dbReference>
<dbReference type="InterPro" id="IPR034733">
    <property type="entry name" value="AcCoA_carboxyl_beta"/>
</dbReference>
<dbReference type="InterPro" id="IPR000438">
    <property type="entry name" value="Acetyl_CoA_COase_Trfase_b_su"/>
</dbReference>
<dbReference type="InterPro" id="IPR029045">
    <property type="entry name" value="ClpP/crotonase-like_dom_sf"/>
</dbReference>
<dbReference type="InterPro" id="IPR011762">
    <property type="entry name" value="COA_CT_N"/>
</dbReference>
<dbReference type="NCBIfam" id="TIGR00515">
    <property type="entry name" value="accD"/>
    <property type="match status" value="1"/>
</dbReference>
<dbReference type="PANTHER" id="PTHR42995">
    <property type="entry name" value="ACETYL-COENZYME A CARBOXYLASE CARBOXYL TRANSFERASE SUBUNIT BETA, CHLOROPLASTIC"/>
    <property type="match status" value="1"/>
</dbReference>
<dbReference type="PANTHER" id="PTHR42995:SF5">
    <property type="entry name" value="ACETYL-COENZYME A CARBOXYLASE CARBOXYL TRANSFERASE SUBUNIT BETA, CHLOROPLASTIC"/>
    <property type="match status" value="1"/>
</dbReference>
<dbReference type="Pfam" id="PF01039">
    <property type="entry name" value="Carboxyl_trans"/>
    <property type="match status" value="1"/>
</dbReference>
<dbReference type="PRINTS" id="PR01070">
    <property type="entry name" value="ACCCTRFRASEB"/>
</dbReference>
<dbReference type="SUPFAM" id="SSF52096">
    <property type="entry name" value="ClpP/crotonase"/>
    <property type="match status" value="1"/>
</dbReference>
<dbReference type="PROSITE" id="PS50980">
    <property type="entry name" value="COA_CT_NTER"/>
    <property type="match status" value="1"/>
</dbReference>
<accession>Q8NZN5</accession>
<organism>
    <name type="scientific">Streptococcus pyogenes serotype M18 (strain MGAS8232)</name>
    <dbReference type="NCBI Taxonomy" id="186103"/>
    <lineage>
        <taxon>Bacteria</taxon>
        <taxon>Bacillati</taxon>
        <taxon>Bacillota</taxon>
        <taxon>Bacilli</taxon>
        <taxon>Lactobacillales</taxon>
        <taxon>Streptococcaceae</taxon>
        <taxon>Streptococcus</taxon>
    </lineage>
</organism>
<sequence>MALFRKKDKYIRITPNNFLKGSVSHNVPEVPDELFAKCPACKHMIYKKDLGLAKICPTCSYNFRISAQERLTLTVDEGSFQELFTSIETKDPLRFPGYQEKLQKAKETTGLHEAVLTGKAMVKGQQIALAIMDSHFIMASMGTVVGEKITRLFELAIEENLPVVIFTASGGARMQEGIMSLMQMAKVSAAVKRHSNAGLFYLTILTDPTTGGVTASFAMEGDIILAEPQSLVGFAGRRVIETTVRENLPDDFQKAEFLQDHGFVDAIVKRTELRDKIAHLVAFHGGGQ</sequence>
<comment type="function">
    <text evidence="1">Component of the acetyl coenzyme A carboxylase (ACC) complex. Biotin carboxylase (BC) catalyzes the carboxylation of biotin on its carrier protein (BCCP) and then the CO(2) group is transferred by the transcarboxylase to acetyl-CoA to form malonyl-CoA.</text>
</comment>
<comment type="catalytic activity">
    <reaction evidence="1">
        <text>N(6)-carboxybiotinyl-L-lysyl-[protein] + acetyl-CoA = N(6)-biotinyl-L-lysyl-[protein] + malonyl-CoA</text>
        <dbReference type="Rhea" id="RHEA:54728"/>
        <dbReference type="Rhea" id="RHEA-COMP:10505"/>
        <dbReference type="Rhea" id="RHEA-COMP:10506"/>
        <dbReference type="ChEBI" id="CHEBI:57288"/>
        <dbReference type="ChEBI" id="CHEBI:57384"/>
        <dbReference type="ChEBI" id="CHEBI:83144"/>
        <dbReference type="ChEBI" id="CHEBI:83145"/>
        <dbReference type="EC" id="2.1.3.15"/>
    </reaction>
</comment>
<comment type="cofactor">
    <cofactor evidence="1">
        <name>Zn(2+)</name>
        <dbReference type="ChEBI" id="CHEBI:29105"/>
    </cofactor>
    <text evidence="1">Binds 1 zinc ion per subunit.</text>
</comment>
<comment type="pathway">
    <text evidence="1">Lipid metabolism; malonyl-CoA biosynthesis; malonyl-CoA from acetyl-CoA: step 1/1.</text>
</comment>
<comment type="subunit">
    <text evidence="1">Acetyl-CoA carboxylase is a heterohexamer composed of biotin carboxyl carrier protein (AccB), biotin carboxylase (AccC) and two subunits each of ACCase subunit alpha (AccA) and ACCase subunit beta (AccD).</text>
</comment>
<comment type="subcellular location">
    <subcellularLocation>
        <location evidence="1">Cytoplasm</location>
    </subcellularLocation>
</comment>
<comment type="similarity">
    <text evidence="1">Belongs to the AccD/PCCB family.</text>
</comment>
<feature type="chain" id="PRO_0000389876" description="Acetyl-coenzyme A carboxylase carboxyl transferase subunit beta">
    <location>
        <begin position="1"/>
        <end position="288"/>
    </location>
</feature>
<feature type="domain" description="CoA carboxyltransferase N-terminal" evidence="2">
    <location>
        <begin position="34"/>
        <end position="288"/>
    </location>
</feature>
<feature type="zinc finger region" description="C4-type" evidence="1">
    <location>
        <begin position="38"/>
        <end position="59"/>
    </location>
</feature>
<feature type="binding site" evidence="1">
    <location>
        <position position="38"/>
    </location>
    <ligand>
        <name>Zn(2+)</name>
        <dbReference type="ChEBI" id="CHEBI:29105"/>
    </ligand>
</feature>
<feature type="binding site" evidence="1">
    <location>
        <position position="41"/>
    </location>
    <ligand>
        <name>Zn(2+)</name>
        <dbReference type="ChEBI" id="CHEBI:29105"/>
    </ligand>
</feature>
<feature type="binding site" evidence="1">
    <location>
        <position position="56"/>
    </location>
    <ligand>
        <name>Zn(2+)</name>
        <dbReference type="ChEBI" id="CHEBI:29105"/>
    </ligand>
</feature>
<feature type="binding site" evidence="1">
    <location>
        <position position="59"/>
    </location>
    <ligand>
        <name>Zn(2+)</name>
        <dbReference type="ChEBI" id="CHEBI:29105"/>
    </ligand>
</feature>
<name>ACCD_STRP8</name>
<gene>
    <name evidence="1" type="primary">accD</name>
    <name type="ordered locus">spyM18_1816</name>
</gene>
<proteinExistence type="inferred from homology"/>
<reference key="1">
    <citation type="journal article" date="2002" name="Proc. Natl. Acad. Sci. U.S.A.">
        <title>Genome sequence and comparative microarray analysis of serotype M18 group A Streptococcus strains associated with acute rheumatic fever outbreaks.</title>
        <authorList>
            <person name="Smoot J.C."/>
            <person name="Barbian K.D."/>
            <person name="Van Gompel J.J."/>
            <person name="Smoot L.M."/>
            <person name="Chaussee M.S."/>
            <person name="Sylva G.L."/>
            <person name="Sturdevant D.E."/>
            <person name="Ricklefs S.M."/>
            <person name="Porcella S.F."/>
            <person name="Parkins L.D."/>
            <person name="Beres S.B."/>
            <person name="Campbell D.S."/>
            <person name="Smith T.M."/>
            <person name="Zhang Q."/>
            <person name="Kapur V."/>
            <person name="Daly J.A."/>
            <person name="Veasy L.G."/>
            <person name="Musser J.M."/>
        </authorList>
    </citation>
    <scope>NUCLEOTIDE SEQUENCE [LARGE SCALE GENOMIC DNA]</scope>
    <source>
        <strain>MGAS8232</strain>
    </source>
</reference>
<protein>
    <recommendedName>
        <fullName evidence="1">Acetyl-coenzyme A carboxylase carboxyl transferase subunit beta</fullName>
        <shortName evidence="1">ACCase subunit beta</shortName>
        <shortName evidence="1">Acetyl-CoA carboxylase carboxyltransferase subunit beta</shortName>
        <ecNumber evidence="1">2.1.3.15</ecNumber>
    </recommendedName>
</protein>
<keyword id="KW-0067">ATP-binding</keyword>
<keyword id="KW-0963">Cytoplasm</keyword>
<keyword id="KW-0275">Fatty acid biosynthesis</keyword>
<keyword id="KW-0276">Fatty acid metabolism</keyword>
<keyword id="KW-0444">Lipid biosynthesis</keyword>
<keyword id="KW-0443">Lipid metabolism</keyword>
<keyword id="KW-0479">Metal-binding</keyword>
<keyword id="KW-0547">Nucleotide-binding</keyword>
<keyword id="KW-0808">Transferase</keyword>
<keyword id="KW-0862">Zinc</keyword>
<keyword id="KW-0863">Zinc-finger</keyword>